<gene>
    <name type="primary">ACH1</name>
    <name type="ordered locus">YBL015W</name>
    <name type="ORF">YBL03.18</name>
    <name type="ORF">YBL0304</name>
</gene>
<protein>
    <recommendedName>
        <fullName>Acetyl-CoA hydrolase</fullName>
        <ecNumber>3.1.2.1</ecNumber>
    </recommendedName>
    <alternativeName>
        <fullName>Acetyl-CoA deacylase</fullName>
        <shortName>Acetyl-CoA acylase</shortName>
    </alternativeName>
</protein>
<accession>P32316</accession>
<accession>D6VPY5</accession>
<dbReference type="EC" id="3.1.2.1"/>
<dbReference type="EMBL" id="M31036">
    <property type="protein sequence ID" value="AAA34388.1"/>
    <property type="molecule type" value="mRNA"/>
</dbReference>
<dbReference type="EMBL" id="X68577">
    <property type="protein sequence ID" value="CAA48570.1"/>
    <property type="molecule type" value="Genomic_DNA"/>
</dbReference>
<dbReference type="EMBL" id="Z35776">
    <property type="protein sequence ID" value="CAA84834.1"/>
    <property type="molecule type" value="Genomic_DNA"/>
</dbReference>
<dbReference type="EMBL" id="BK006936">
    <property type="protein sequence ID" value="DAA07105.1"/>
    <property type="molecule type" value="Genomic_DNA"/>
</dbReference>
<dbReference type="PIR" id="S28549">
    <property type="entry name" value="S28549"/>
</dbReference>
<dbReference type="RefSeq" id="NP_009538.1">
    <property type="nucleotide sequence ID" value="NM_001178255.1"/>
</dbReference>
<dbReference type="PDB" id="8DH7">
    <property type="method" value="EM"/>
    <property type="resolution" value="2.99 A"/>
    <property type="chains" value="A/B=1-526"/>
</dbReference>
<dbReference type="PDBsum" id="8DH7"/>
<dbReference type="EMDB" id="EMD-27431"/>
<dbReference type="SMR" id="P32316"/>
<dbReference type="BioGRID" id="32683">
    <property type="interactions" value="160"/>
</dbReference>
<dbReference type="DIP" id="DIP-6548N"/>
<dbReference type="FunCoup" id="P32316">
    <property type="interactions" value="294"/>
</dbReference>
<dbReference type="IntAct" id="P32316">
    <property type="interactions" value="10"/>
</dbReference>
<dbReference type="STRING" id="4932.YBL015W"/>
<dbReference type="GlyGen" id="P32316">
    <property type="glycosylation" value="1 site"/>
</dbReference>
<dbReference type="iPTMnet" id="P32316"/>
<dbReference type="PaxDb" id="4932-YBL015W"/>
<dbReference type="PeptideAtlas" id="P32316"/>
<dbReference type="EnsemblFungi" id="YBL015W_mRNA">
    <property type="protein sequence ID" value="YBL015W"/>
    <property type="gene ID" value="YBL015W"/>
</dbReference>
<dbReference type="GeneID" id="852266"/>
<dbReference type="KEGG" id="sce:YBL015W"/>
<dbReference type="AGR" id="SGD:S000000111"/>
<dbReference type="SGD" id="S000000111">
    <property type="gene designation" value="ACH1"/>
</dbReference>
<dbReference type="VEuPathDB" id="FungiDB:YBL015W"/>
<dbReference type="eggNOG" id="KOG2828">
    <property type="taxonomic scope" value="Eukaryota"/>
</dbReference>
<dbReference type="GeneTree" id="ENSGT00390000011259"/>
<dbReference type="HOGENOM" id="CLU_019748_3_0_1"/>
<dbReference type="InParanoid" id="P32316"/>
<dbReference type="OMA" id="SCIVPMV"/>
<dbReference type="OrthoDB" id="10250396at2759"/>
<dbReference type="BioCyc" id="MetaCyc:YBL015W-MONOMER"/>
<dbReference type="BioCyc" id="YEAST:YBL015W-MONOMER"/>
<dbReference type="BioGRID-ORCS" id="852266">
    <property type="hits" value="0 hits in 10 CRISPR screens"/>
</dbReference>
<dbReference type="PRO" id="PR:P32316"/>
<dbReference type="Proteomes" id="UP000002311">
    <property type="component" value="Chromosome II"/>
</dbReference>
<dbReference type="RNAct" id="P32316">
    <property type="molecule type" value="protein"/>
</dbReference>
<dbReference type="GO" id="GO:0005829">
    <property type="term" value="C:cytosol"/>
    <property type="evidence" value="ECO:0000314"/>
    <property type="project" value="SGD"/>
</dbReference>
<dbReference type="GO" id="GO:0005739">
    <property type="term" value="C:mitochondrion"/>
    <property type="evidence" value="ECO:0000314"/>
    <property type="project" value="SGD"/>
</dbReference>
<dbReference type="GO" id="GO:0008775">
    <property type="term" value="F:acetate CoA-transferase activity"/>
    <property type="evidence" value="ECO:0000314"/>
    <property type="project" value="SGD"/>
</dbReference>
<dbReference type="GO" id="GO:0003986">
    <property type="term" value="F:acetyl-CoA hydrolase activity"/>
    <property type="evidence" value="ECO:0000314"/>
    <property type="project" value="SGD"/>
</dbReference>
<dbReference type="GO" id="GO:0006083">
    <property type="term" value="P:acetate metabolic process"/>
    <property type="evidence" value="ECO:0000315"/>
    <property type="project" value="SGD"/>
</dbReference>
<dbReference type="FunFam" id="3.30.750.70:FF:000002">
    <property type="entry name" value="Acetyl-CoA hydrolase Ach1"/>
    <property type="match status" value="1"/>
</dbReference>
<dbReference type="FunFam" id="3.40.1080.20:FF:000001">
    <property type="entry name" value="Acetyl-CoA hydrolase Ach1"/>
    <property type="match status" value="1"/>
</dbReference>
<dbReference type="FunFam" id="3.40.1080.10:FF:000003">
    <property type="entry name" value="Acetyl-coA hydrolase Ach1"/>
    <property type="match status" value="1"/>
</dbReference>
<dbReference type="Gene3D" id="3.30.750.70">
    <property type="entry name" value="4-hydroxybutyrate coenzyme like domains"/>
    <property type="match status" value="1"/>
</dbReference>
<dbReference type="Gene3D" id="3.40.1080.20">
    <property type="entry name" value="Acetyl-CoA hydrolase/transferase C-terminal domain"/>
    <property type="match status" value="1"/>
</dbReference>
<dbReference type="Gene3D" id="3.40.1080.10">
    <property type="entry name" value="Glutaconate Coenzyme A-transferase"/>
    <property type="match status" value="1"/>
</dbReference>
<dbReference type="InterPro" id="IPR026888">
    <property type="entry name" value="AcetylCoA_hyd_C"/>
</dbReference>
<dbReference type="InterPro" id="IPR038460">
    <property type="entry name" value="AcetylCoA_hyd_C_sf"/>
</dbReference>
<dbReference type="InterPro" id="IPR046433">
    <property type="entry name" value="ActCoA_hydro"/>
</dbReference>
<dbReference type="InterPro" id="IPR003702">
    <property type="entry name" value="ActCoA_hydro_N"/>
</dbReference>
<dbReference type="InterPro" id="IPR037171">
    <property type="entry name" value="NagB/RpiA_transferase-like"/>
</dbReference>
<dbReference type="PANTHER" id="PTHR43609">
    <property type="entry name" value="ACETYL-COA HYDROLASE"/>
    <property type="match status" value="1"/>
</dbReference>
<dbReference type="PANTHER" id="PTHR43609:SF1">
    <property type="entry name" value="ACETYL-COA HYDROLASE"/>
    <property type="match status" value="1"/>
</dbReference>
<dbReference type="Pfam" id="PF13336">
    <property type="entry name" value="AcetylCoA_hyd_C"/>
    <property type="match status" value="1"/>
</dbReference>
<dbReference type="Pfam" id="PF02550">
    <property type="entry name" value="AcetylCoA_hydro"/>
    <property type="match status" value="1"/>
</dbReference>
<dbReference type="SUPFAM" id="SSF100950">
    <property type="entry name" value="NagB/RpiA/CoA transferase-like"/>
    <property type="match status" value="2"/>
</dbReference>
<comment type="function">
    <text>Presumably involved in regulating the intracellular acetyl-CoA pool for fatty acid and cholesterol synthesis and fatty acid oxidation. It may be involved in overall regulation of acetylation during melatonin synthesis.</text>
</comment>
<comment type="catalytic activity">
    <reaction>
        <text>acetyl-CoA + H2O = acetate + CoA + H(+)</text>
        <dbReference type="Rhea" id="RHEA:20289"/>
        <dbReference type="ChEBI" id="CHEBI:15377"/>
        <dbReference type="ChEBI" id="CHEBI:15378"/>
        <dbReference type="ChEBI" id="CHEBI:30089"/>
        <dbReference type="ChEBI" id="CHEBI:57287"/>
        <dbReference type="ChEBI" id="CHEBI:57288"/>
        <dbReference type="EC" id="3.1.2.1"/>
    </reaction>
</comment>
<comment type="subunit">
    <text>Monomer.</text>
</comment>
<comment type="subcellular location">
    <subcellularLocation>
        <location evidence="2">Cytoplasm</location>
    </subcellularLocation>
</comment>
<comment type="PTM">
    <text>Glycosylated; contains mannose.</text>
</comment>
<comment type="miscellaneous">
    <text evidence="3">Present with 4890 molecules/cell in log phase SD medium.</text>
</comment>
<comment type="similarity">
    <text evidence="5">Belongs to the acetyl-CoA hydrolase/transferase family.</text>
</comment>
<organism>
    <name type="scientific">Saccharomyces cerevisiae (strain ATCC 204508 / S288c)</name>
    <name type="common">Baker's yeast</name>
    <dbReference type="NCBI Taxonomy" id="559292"/>
    <lineage>
        <taxon>Eukaryota</taxon>
        <taxon>Fungi</taxon>
        <taxon>Dikarya</taxon>
        <taxon>Ascomycota</taxon>
        <taxon>Saccharomycotina</taxon>
        <taxon>Saccharomycetes</taxon>
        <taxon>Saccharomycetales</taxon>
        <taxon>Saccharomycetaceae</taxon>
        <taxon>Saccharomyces</taxon>
    </lineage>
</organism>
<keyword id="KW-0002">3D-structure</keyword>
<keyword id="KW-0007">Acetylation</keyword>
<keyword id="KW-0963">Cytoplasm</keyword>
<keyword id="KW-0903">Direct protein sequencing</keyword>
<keyword id="KW-0325">Glycoprotein</keyword>
<keyword id="KW-0378">Hydrolase</keyword>
<keyword id="KW-0597">Phosphoprotein</keyword>
<keyword id="KW-1185">Reference proteome</keyword>
<proteinExistence type="evidence at protein level"/>
<name>ACH1_YEAST</name>
<reference key="1">
    <citation type="journal article" date="1990" name="J. Biol. Chem.">
        <title>A glucose-repressible gene encodes acetyl-CoA hydrolase from Saccharomyces cerevisiae.</title>
        <authorList>
            <person name="Lee F.-J.S."/>
            <person name="Lin L.-W."/>
            <person name="Smith J.A."/>
        </authorList>
    </citation>
    <scope>NUCLEOTIDE SEQUENCE [MRNA]</scope>
    <scope>PARTIAL PROTEIN SEQUENCE</scope>
    <scope>ACETYLATION AT THR-2</scope>
</reference>
<reference key="2">
    <citation type="journal article" date="1992" name="Yeast">
        <title>An 11.4 kb DNA segment on the left arm of yeast chromosome II carries the carboxypeptidase Y sorting gene PEP1, as well as ACH1, FUS3 and a putative ARS.</title>
        <authorList>
            <person name="van Dyck L."/>
            <person name="Purnelle B."/>
            <person name="Skala J."/>
            <person name="Goffeau A."/>
        </authorList>
    </citation>
    <scope>NUCLEOTIDE SEQUENCE</scope>
    <source>
        <strain>ATCC 204508 / S288c</strain>
    </source>
</reference>
<reference key="3">
    <citation type="journal article" date="1994" name="EMBO J.">
        <title>Complete DNA sequence of yeast chromosome II.</title>
        <authorList>
            <person name="Feldmann H."/>
            <person name="Aigle M."/>
            <person name="Aljinovic G."/>
            <person name="Andre B."/>
            <person name="Baclet M.C."/>
            <person name="Barthe C."/>
            <person name="Baur A."/>
            <person name="Becam A.-M."/>
            <person name="Biteau N."/>
            <person name="Boles E."/>
            <person name="Brandt T."/>
            <person name="Brendel M."/>
            <person name="Brueckner M."/>
            <person name="Bussereau F."/>
            <person name="Christiansen C."/>
            <person name="Contreras R."/>
            <person name="Crouzet M."/>
            <person name="Cziepluch C."/>
            <person name="Demolis N."/>
            <person name="Delaveau T."/>
            <person name="Doignon F."/>
            <person name="Domdey H."/>
            <person name="Duesterhus S."/>
            <person name="Dubois E."/>
            <person name="Dujon B."/>
            <person name="El Bakkoury M."/>
            <person name="Entian K.-D."/>
            <person name="Feuermann M."/>
            <person name="Fiers W."/>
            <person name="Fobo G.M."/>
            <person name="Fritz C."/>
            <person name="Gassenhuber J."/>
            <person name="Glansdorff N."/>
            <person name="Goffeau A."/>
            <person name="Grivell L.A."/>
            <person name="de Haan M."/>
            <person name="Hein C."/>
            <person name="Herbert C.J."/>
            <person name="Hollenberg C.P."/>
            <person name="Holmstroem K."/>
            <person name="Jacq C."/>
            <person name="Jacquet M."/>
            <person name="Jauniaux J.-C."/>
            <person name="Jonniaux J.-L."/>
            <person name="Kallesoee T."/>
            <person name="Kiesau P."/>
            <person name="Kirchrath L."/>
            <person name="Koetter P."/>
            <person name="Korol S."/>
            <person name="Liebl S."/>
            <person name="Logghe M."/>
            <person name="Lohan A.J.E."/>
            <person name="Louis E.J."/>
            <person name="Li Z.Y."/>
            <person name="Maat M.J."/>
            <person name="Mallet L."/>
            <person name="Mannhaupt G."/>
            <person name="Messenguy F."/>
            <person name="Miosga T."/>
            <person name="Molemans F."/>
            <person name="Mueller S."/>
            <person name="Nasr F."/>
            <person name="Obermaier B."/>
            <person name="Perea J."/>
            <person name="Pierard A."/>
            <person name="Piravandi E."/>
            <person name="Pohl F.M."/>
            <person name="Pohl T.M."/>
            <person name="Potier S."/>
            <person name="Proft M."/>
            <person name="Purnelle B."/>
            <person name="Ramezani Rad M."/>
            <person name="Rieger M."/>
            <person name="Rose M."/>
            <person name="Schaaff-Gerstenschlaeger I."/>
            <person name="Scherens B."/>
            <person name="Schwarzlose C."/>
            <person name="Skala J."/>
            <person name="Slonimski P.P."/>
            <person name="Smits P.H.M."/>
            <person name="Souciet J.-L."/>
            <person name="Steensma H.Y."/>
            <person name="Stucka R."/>
            <person name="Urrestarazu L.A."/>
            <person name="van der Aart Q.J.M."/>
            <person name="Van Dyck L."/>
            <person name="Vassarotti A."/>
            <person name="Vetter I."/>
            <person name="Vierendeels F."/>
            <person name="Vissers S."/>
            <person name="Wagner G."/>
            <person name="de Wergifosse P."/>
            <person name="Wolfe K.H."/>
            <person name="Zagulski M."/>
            <person name="Zimmermann F.K."/>
            <person name="Mewes H.-W."/>
            <person name="Kleine K."/>
        </authorList>
    </citation>
    <scope>NUCLEOTIDE SEQUENCE [LARGE SCALE GENOMIC DNA]</scope>
    <source>
        <strain>ATCC 204508 / S288c</strain>
    </source>
</reference>
<reference key="4">
    <citation type="journal article" date="2014" name="G3 (Bethesda)">
        <title>The reference genome sequence of Saccharomyces cerevisiae: Then and now.</title>
        <authorList>
            <person name="Engel S.R."/>
            <person name="Dietrich F.S."/>
            <person name="Fisk D.G."/>
            <person name="Binkley G."/>
            <person name="Balakrishnan R."/>
            <person name="Costanzo M.C."/>
            <person name="Dwight S.S."/>
            <person name="Hitz B.C."/>
            <person name="Karra K."/>
            <person name="Nash R.S."/>
            <person name="Weng S."/>
            <person name="Wong E.D."/>
            <person name="Lloyd P."/>
            <person name="Skrzypek M.S."/>
            <person name="Miyasato S.R."/>
            <person name="Simison M."/>
            <person name="Cherry J.M."/>
        </authorList>
    </citation>
    <scope>GENOME REANNOTATION</scope>
    <source>
        <strain>ATCC 204508 / S288c</strain>
    </source>
</reference>
<reference key="5">
    <citation type="journal article" date="2001" name="Biochemistry">
        <title>Yeast mitochondrial dehydrogenases are associated in a supramolecular complex.</title>
        <authorList>
            <person name="Grandier-Vazeille X."/>
            <person name="Bathany K."/>
            <person name="Chaignepain S."/>
            <person name="Camougrand N."/>
            <person name="Manon S."/>
            <person name="Schmitter J.-M."/>
        </authorList>
    </citation>
    <scope>PROTEIN SEQUENCE OF 174-181</scope>
    <scope>SUBCELLULAR LOCATION</scope>
    <source>
        <strain>ATCC 201238 / W303-1B</strain>
    </source>
</reference>
<reference key="6">
    <citation type="journal article" date="2003" name="Nature">
        <title>Global analysis of protein expression in yeast.</title>
        <authorList>
            <person name="Ghaemmaghami S."/>
            <person name="Huh W.-K."/>
            <person name="Bower K."/>
            <person name="Howson R.W."/>
            <person name="Belle A."/>
            <person name="Dephoure N."/>
            <person name="O'Shea E.K."/>
            <person name="Weissman J.S."/>
        </authorList>
    </citation>
    <scope>LEVEL OF PROTEIN EXPRESSION [LARGE SCALE ANALYSIS]</scope>
</reference>
<reference key="7">
    <citation type="journal article" date="2007" name="Mol. Cell. Proteomics">
        <title>Profiling phosphoproteins of yeast mitochondria reveals a role of phosphorylation in assembly of the ATP synthase.</title>
        <authorList>
            <person name="Reinders J."/>
            <person name="Wagner K."/>
            <person name="Zahedi R.P."/>
            <person name="Stojanovski D."/>
            <person name="Eyrich B."/>
            <person name="van der Laan M."/>
            <person name="Rehling P."/>
            <person name="Sickmann A."/>
            <person name="Pfanner N."/>
            <person name="Meisinger C."/>
        </authorList>
    </citation>
    <scope>PHOSPHORYLATION [LARGE SCALE ANALYSIS] AT SER-350</scope>
    <scope>IDENTIFICATION BY MASS SPECTROMETRY [LARGE SCALE ANALYSIS]</scope>
    <source>
        <strain>ATCC 76625 / YPH499</strain>
    </source>
</reference>
<reference key="8">
    <citation type="journal article" date="2012" name="Proc. Natl. Acad. Sci. U.S.A.">
        <title>N-terminal acetylome analyses and functional insights of the N-terminal acetyltransferase NatB.</title>
        <authorList>
            <person name="Van Damme P."/>
            <person name="Lasa M."/>
            <person name="Polevoda B."/>
            <person name="Gazquez C."/>
            <person name="Elosegui-Artola A."/>
            <person name="Kim D.S."/>
            <person name="De Juan-Pardo E."/>
            <person name="Demeyer K."/>
            <person name="Hole K."/>
            <person name="Larrea E."/>
            <person name="Timmerman E."/>
            <person name="Prieto J."/>
            <person name="Arnesen T."/>
            <person name="Sherman F."/>
            <person name="Gevaert K."/>
            <person name="Aldabe R."/>
        </authorList>
    </citation>
    <scope>IDENTIFICATION BY MASS SPECTROMETRY [LARGE SCALE ANALYSIS]</scope>
</reference>
<evidence type="ECO:0000250" key="1">
    <source>
        <dbReference type="UniProtKB" id="B3EY95"/>
    </source>
</evidence>
<evidence type="ECO:0000269" key="2">
    <source>
    </source>
</evidence>
<evidence type="ECO:0000269" key="3">
    <source>
    </source>
</evidence>
<evidence type="ECO:0000303" key="4">
    <source>
    </source>
</evidence>
<evidence type="ECO:0000305" key="5"/>
<evidence type="ECO:0007744" key="6">
    <source>
    </source>
</evidence>
<evidence type="ECO:0007829" key="7">
    <source>
        <dbReference type="PDB" id="8DH7"/>
    </source>
</evidence>
<sequence length="526" mass="58712">MTISNLLKQRVRYAPYLKKVKEAHELIPLFKNGQYLGWSGFTGVGTPKAVPEALIDHVEKNNLQGKLRFNLFVGASAGPEENRWAEHDMIIKRAPHQVGKPIAKAINQGRIEFFDKHLSMFPQDLTYGFYTRERKDNKILDYTIIEATAIKEDGSIVPGPSVGGSPEFITVSDKVIIEVNTATPSFEGIHDIDMPVNPPFRKPYPYLKVDDKCGVDSIPVDPEKVVAIVESTMRDQVPPNTPSDDMSRAIAGHLVEFFRNEVKHGRLPENLLPLQSGIGNIANAVIEGLAGAQFKHLTVWTEVLQDSFLDLFENGSLDYATATSVRLTEKGFDRAFANWENFKHRLCLRSQVVSNNPEMIRRLGVIAMNTPVEVDIYAHANSTNVNGSRMLNGLGGSADFLRNAKLSIMHAPSARPTKVDPTGISTIVPMASHVDQTEHDLDILVTDQGLADLRGLSPKERAREIINKCAHPDYQALLTDYLDRAEHYAKKHNCLHEPHMLKNAFKFHTNLAEKGTMKVDSWEPVD</sequence>
<feature type="initiator methionine" description="Removed" evidence="4">
    <location>
        <position position="1"/>
    </location>
</feature>
<feature type="chain" id="PRO_0000215524" description="Acetyl-CoA hydrolase">
    <location>
        <begin position="2"/>
        <end position="526"/>
    </location>
</feature>
<feature type="active site" description="5-glutamyl coenzyme A thioester intermediate" evidence="1">
    <location>
        <position position="302"/>
    </location>
</feature>
<feature type="binding site" evidence="1">
    <location>
        <begin position="277"/>
        <end position="281"/>
    </location>
    <ligand>
        <name>CoA</name>
        <dbReference type="ChEBI" id="CHEBI:57287"/>
    </ligand>
</feature>
<feature type="binding site" evidence="1">
    <location>
        <position position="392"/>
    </location>
    <ligand>
        <name>CoA</name>
        <dbReference type="ChEBI" id="CHEBI:57287"/>
    </ligand>
</feature>
<feature type="binding site" evidence="1">
    <location>
        <position position="396"/>
    </location>
    <ligand>
        <name>CoA</name>
        <dbReference type="ChEBI" id="CHEBI:57287"/>
    </ligand>
</feature>
<feature type="modified residue" description="N-acetylthreonine" evidence="4">
    <location>
        <position position="2"/>
    </location>
</feature>
<feature type="modified residue" description="Phosphoserine" evidence="6">
    <location>
        <position position="350"/>
    </location>
</feature>
<feature type="sequence conflict" description="In Ref. 1; AAA34388." evidence="5" ref="1">
    <original>F</original>
    <variation>L</variation>
    <location>
        <position position="308"/>
    </location>
</feature>
<feature type="sequence conflict" description="In Ref. 1; AAA34388." evidence="5" ref="1">
    <original>A</original>
    <variation>S</variation>
    <location>
        <position position="320"/>
    </location>
</feature>
<feature type="sequence conflict" description="In Ref. 1; AAA34388." evidence="5" ref="1">
    <original>LG</original>
    <variation>FP</variation>
    <location>
        <begin position="363"/>
        <end position="364"/>
    </location>
</feature>
<feature type="helix" evidence="7">
    <location>
        <begin position="5"/>
        <end position="10"/>
    </location>
</feature>
<feature type="helix" evidence="7">
    <location>
        <begin position="14"/>
        <end position="19"/>
    </location>
</feature>
<feature type="helix" evidence="7">
    <location>
        <begin position="23"/>
        <end position="29"/>
    </location>
</feature>
<feature type="strand" evidence="7">
    <location>
        <begin position="35"/>
        <end position="38"/>
    </location>
</feature>
<feature type="helix" evidence="7">
    <location>
        <begin position="49"/>
        <end position="61"/>
    </location>
</feature>
<feature type="turn" evidence="7">
    <location>
        <begin position="64"/>
        <end position="66"/>
    </location>
</feature>
<feature type="strand" evidence="7">
    <location>
        <begin position="69"/>
        <end position="75"/>
    </location>
</feature>
<feature type="helix" evidence="7">
    <location>
        <begin position="79"/>
        <end position="86"/>
    </location>
</feature>
<feature type="strand" evidence="7">
    <location>
        <begin position="90"/>
        <end position="95"/>
    </location>
</feature>
<feature type="helix" evidence="7">
    <location>
        <begin position="100"/>
        <end position="107"/>
    </location>
</feature>
<feature type="strand" evidence="7">
    <location>
        <begin position="110"/>
        <end position="113"/>
    </location>
</feature>
<feature type="turn" evidence="7">
    <location>
        <begin position="118"/>
        <end position="120"/>
    </location>
</feature>
<feature type="helix" evidence="7">
    <location>
        <begin position="121"/>
        <end position="126"/>
    </location>
</feature>
<feature type="strand" evidence="7">
    <location>
        <begin position="139"/>
        <end position="150"/>
    </location>
</feature>
<feature type="helix" evidence="7">
    <location>
        <begin position="165"/>
        <end position="170"/>
    </location>
</feature>
<feature type="strand" evidence="7">
    <location>
        <begin position="172"/>
        <end position="180"/>
    </location>
</feature>
<feature type="turn" evidence="7">
    <location>
        <begin position="187"/>
        <end position="189"/>
    </location>
</feature>
<feature type="turn" evidence="7">
    <location>
        <begin position="222"/>
        <end position="224"/>
    </location>
</feature>
<feature type="strand" evidence="7">
    <location>
        <begin position="225"/>
        <end position="231"/>
    </location>
</feature>
<feature type="helix" evidence="7">
    <location>
        <begin position="247"/>
        <end position="263"/>
    </location>
</feature>
<feature type="helix" evidence="7">
    <location>
        <begin position="280"/>
        <end position="290"/>
    </location>
</feature>
<feature type="turn" evidence="7">
    <location>
        <begin position="291"/>
        <end position="293"/>
    </location>
</feature>
<feature type="strand" evidence="7">
    <location>
        <begin position="296"/>
        <end position="300"/>
    </location>
</feature>
<feature type="strand" evidence="7">
    <location>
        <begin position="302"/>
        <end position="304"/>
    </location>
</feature>
<feature type="helix" evidence="7">
    <location>
        <begin position="306"/>
        <end position="314"/>
    </location>
</feature>
<feature type="strand" evidence="7">
    <location>
        <begin position="315"/>
        <end position="325"/>
    </location>
</feature>
<feature type="helix" evidence="7">
    <location>
        <begin position="329"/>
        <end position="336"/>
    </location>
</feature>
<feature type="helix" evidence="7">
    <location>
        <begin position="339"/>
        <end position="343"/>
    </location>
</feature>
<feature type="strand" evidence="7">
    <location>
        <begin position="346"/>
        <end position="350"/>
    </location>
</feature>
<feature type="helix" evidence="7">
    <location>
        <begin position="351"/>
        <end position="354"/>
    </location>
</feature>
<feature type="helix" evidence="7">
    <location>
        <begin position="357"/>
        <end position="363"/>
    </location>
</feature>
<feature type="strand" evidence="7">
    <location>
        <begin position="366"/>
        <end position="369"/>
    </location>
</feature>
<feature type="strand" evidence="7">
    <location>
        <begin position="372"/>
        <end position="375"/>
    </location>
</feature>
<feature type="strand" evidence="7">
    <location>
        <begin position="380"/>
        <end position="385"/>
    </location>
</feature>
<feature type="turn" evidence="7">
    <location>
        <begin position="386"/>
        <end position="388"/>
    </location>
</feature>
<feature type="helix" evidence="7">
    <location>
        <begin position="397"/>
        <end position="403"/>
    </location>
</feature>
<feature type="strand" evidence="7">
    <location>
        <begin position="404"/>
        <end position="410"/>
    </location>
</feature>
<feature type="strand" evidence="7">
    <location>
        <begin position="413"/>
        <end position="415"/>
    </location>
</feature>
<feature type="strand" evidence="7">
    <location>
        <begin position="424"/>
        <end position="430"/>
    </location>
</feature>
<feature type="turn" evidence="7">
    <location>
        <begin position="438"/>
        <end position="440"/>
    </location>
</feature>
<feature type="strand" evidence="7">
    <location>
        <begin position="443"/>
        <end position="445"/>
    </location>
</feature>
<feature type="strand" evidence="7">
    <location>
        <begin position="450"/>
        <end position="452"/>
    </location>
</feature>
<feature type="helix" evidence="7">
    <location>
        <begin position="458"/>
        <end position="468"/>
    </location>
</feature>
<feature type="helix" evidence="7">
    <location>
        <begin position="472"/>
        <end position="492"/>
    </location>
</feature>
<feature type="turn" evidence="7">
    <location>
        <begin position="501"/>
        <end position="505"/>
    </location>
</feature>
<feature type="helix" evidence="7">
    <location>
        <begin position="506"/>
        <end position="514"/>
    </location>
</feature>
<feature type="strand" evidence="7">
    <location>
        <begin position="515"/>
        <end position="517"/>
    </location>
</feature>